<proteinExistence type="inferred from homology"/>
<comment type="function">
    <text evidence="1">Key enzyme in the regulation of glycerol uptake and metabolism. Catalyzes the phosphorylation of glycerol to yield sn-glycerol 3-phosphate.</text>
</comment>
<comment type="catalytic activity">
    <reaction evidence="1">
        <text>glycerol + ATP = sn-glycerol 3-phosphate + ADP + H(+)</text>
        <dbReference type="Rhea" id="RHEA:21644"/>
        <dbReference type="ChEBI" id="CHEBI:15378"/>
        <dbReference type="ChEBI" id="CHEBI:17754"/>
        <dbReference type="ChEBI" id="CHEBI:30616"/>
        <dbReference type="ChEBI" id="CHEBI:57597"/>
        <dbReference type="ChEBI" id="CHEBI:456216"/>
        <dbReference type="EC" id="2.7.1.30"/>
    </reaction>
</comment>
<comment type="activity regulation">
    <text evidence="1">Activated by phosphorylation and inhibited by fructose 1,6-bisphosphate (FBP).</text>
</comment>
<comment type="pathway">
    <text evidence="1">Polyol metabolism; glycerol degradation via glycerol kinase pathway; sn-glycerol 3-phosphate from glycerol: step 1/1.</text>
</comment>
<comment type="subunit">
    <text evidence="1">Homotetramer and homodimer (in equilibrium).</text>
</comment>
<comment type="similarity">
    <text evidence="1">Belongs to the FGGY kinase family.</text>
</comment>
<protein>
    <recommendedName>
        <fullName evidence="1">Glycerol kinase</fullName>
        <ecNumber evidence="1">2.7.1.30</ecNumber>
    </recommendedName>
    <alternativeName>
        <fullName evidence="1">ATP:glycerol 3-phosphotransferase</fullName>
    </alternativeName>
    <alternativeName>
        <fullName evidence="1">Glycerokinase</fullName>
        <shortName evidence="1">GK</shortName>
    </alternativeName>
</protein>
<evidence type="ECO:0000255" key="1">
    <source>
        <dbReference type="HAMAP-Rule" id="MF_00186"/>
    </source>
</evidence>
<name>GLPK_CLOPE</name>
<accession>Q8XHD3</accession>
<keyword id="KW-0067">ATP-binding</keyword>
<keyword id="KW-0319">Glycerol metabolism</keyword>
<keyword id="KW-0418">Kinase</keyword>
<keyword id="KW-0547">Nucleotide-binding</keyword>
<keyword id="KW-1185">Reference proteome</keyword>
<keyword id="KW-0808">Transferase</keyword>
<dbReference type="EC" id="2.7.1.30" evidence="1"/>
<dbReference type="EMBL" id="BA000016">
    <property type="protein sequence ID" value="BAB82258.1"/>
    <property type="molecule type" value="Genomic_DNA"/>
</dbReference>
<dbReference type="RefSeq" id="WP_003462978.1">
    <property type="nucleotide sequence ID" value="NC_003366.1"/>
</dbReference>
<dbReference type="SMR" id="Q8XHD3"/>
<dbReference type="STRING" id="195102.gene:10491886"/>
<dbReference type="KEGG" id="cpe:CPE2552"/>
<dbReference type="HOGENOM" id="CLU_009281_2_3_9"/>
<dbReference type="UniPathway" id="UPA00618">
    <property type="reaction ID" value="UER00672"/>
</dbReference>
<dbReference type="Proteomes" id="UP000000818">
    <property type="component" value="Chromosome"/>
</dbReference>
<dbReference type="GO" id="GO:0005829">
    <property type="term" value="C:cytosol"/>
    <property type="evidence" value="ECO:0007669"/>
    <property type="project" value="TreeGrafter"/>
</dbReference>
<dbReference type="GO" id="GO:0005524">
    <property type="term" value="F:ATP binding"/>
    <property type="evidence" value="ECO:0007669"/>
    <property type="project" value="UniProtKB-UniRule"/>
</dbReference>
<dbReference type="GO" id="GO:0004370">
    <property type="term" value="F:glycerol kinase activity"/>
    <property type="evidence" value="ECO:0000250"/>
    <property type="project" value="UniProtKB"/>
</dbReference>
<dbReference type="GO" id="GO:0019563">
    <property type="term" value="P:glycerol catabolic process"/>
    <property type="evidence" value="ECO:0007669"/>
    <property type="project" value="UniProtKB-UniRule"/>
</dbReference>
<dbReference type="GO" id="GO:0006071">
    <property type="term" value="P:glycerol metabolic process"/>
    <property type="evidence" value="ECO:0000250"/>
    <property type="project" value="UniProtKB"/>
</dbReference>
<dbReference type="GO" id="GO:0006072">
    <property type="term" value="P:glycerol-3-phosphate metabolic process"/>
    <property type="evidence" value="ECO:0007669"/>
    <property type="project" value="InterPro"/>
</dbReference>
<dbReference type="CDD" id="cd07786">
    <property type="entry name" value="FGGY_EcGK_like"/>
    <property type="match status" value="1"/>
</dbReference>
<dbReference type="FunFam" id="3.30.420.40:FF:000007">
    <property type="entry name" value="Glycerol kinase"/>
    <property type="match status" value="1"/>
</dbReference>
<dbReference type="FunFam" id="3.30.420.40:FF:000008">
    <property type="entry name" value="Glycerol kinase"/>
    <property type="match status" value="1"/>
</dbReference>
<dbReference type="Gene3D" id="3.30.420.40">
    <property type="match status" value="2"/>
</dbReference>
<dbReference type="HAMAP" id="MF_00186">
    <property type="entry name" value="Glycerol_kin"/>
    <property type="match status" value="1"/>
</dbReference>
<dbReference type="InterPro" id="IPR043129">
    <property type="entry name" value="ATPase_NBD"/>
</dbReference>
<dbReference type="InterPro" id="IPR000577">
    <property type="entry name" value="Carb_kinase_FGGY"/>
</dbReference>
<dbReference type="InterPro" id="IPR018483">
    <property type="entry name" value="Carb_kinase_FGGY_CS"/>
</dbReference>
<dbReference type="InterPro" id="IPR018485">
    <property type="entry name" value="FGGY_C"/>
</dbReference>
<dbReference type="InterPro" id="IPR018484">
    <property type="entry name" value="FGGY_N"/>
</dbReference>
<dbReference type="InterPro" id="IPR005999">
    <property type="entry name" value="Glycerol_kin"/>
</dbReference>
<dbReference type="NCBIfam" id="TIGR01311">
    <property type="entry name" value="glycerol_kin"/>
    <property type="match status" value="1"/>
</dbReference>
<dbReference type="NCBIfam" id="NF000756">
    <property type="entry name" value="PRK00047.1"/>
    <property type="match status" value="1"/>
</dbReference>
<dbReference type="PANTHER" id="PTHR10196:SF69">
    <property type="entry name" value="GLYCEROL KINASE"/>
    <property type="match status" value="1"/>
</dbReference>
<dbReference type="PANTHER" id="PTHR10196">
    <property type="entry name" value="SUGAR KINASE"/>
    <property type="match status" value="1"/>
</dbReference>
<dbReference type="Pfam" id="PF02782">
    <property type="entry name" value="FGGY_C"/>
    <property type="match status" value="1"/>
</dbReference>
<dbReference type="Pfam" id="PF00370">
    <property type="entry name" value="FGGY_N"/>
    <property type="match status" value="1"/>
</dbReference>
<dbReference type="PIRSF" id="PIRSF000538">
    <property type="entry name" value="GlpK"/>
    <property type="match status" value="1"/>
</dbReference>
<dbReference type="SUPFAM" id="SSF53067">
    <property type="entry name" value="Actin-like ATPase domain"/>
    <property type="match status" value="2"/>
</dbReference>
<dbReference type="PROSITE" id="PS00933">
    <property type="entry name" value="FGGY_KINASES_1"/>
    <property type="match status" value="1"/>
</dbReference>
<dbReference type="PROSITE" id="PS00445">
    <property type="entry name" value="FGGY_KINASES_2"/>
    <property type="match status" value="1"/>
</dbReference>
<feature type="chain" id="PRO_0000059444" description="Glycerol kinase">
    <location>
        <begin position="1"/>
        <end position="500"/>
    </location>
</feature>
<feature type="binding site" evidence="1">
    <location>
        <position position="12"/>
    </location>
    <ligand>
        <name>ADP</name>
        <dbReference type="ChEBI" id="CHEBI:456216"/>
    </ligand>
</feature>
<feature type="binding site" evidence="1">
    <location>
        <position position="12"/>
    </location>
    <ligand>
        <name>ATP</name>
        <dbReference type="ChEBI" id="CHEBI:30616"/>
    </ligand>
</feature>
<feature type="binding site" evidence="1">
    <location>
        <position position="12"/>
    </location>
    <ligand>
        <name>sn-glycerol 3-phosphate</name>
        <dbReference type="ChEBI" id="CHEBI:57597"/>
    </ligand>
</feature>
<feature type="binding site" evidence="1">
    <location>
        <position position="13"/>
    </location>
    <ligand>
        <name>ATP</name>
        <dbReference type="ChEBI" id="CHEBI:30616"/>
    </ligand>
</feature>
<feature type="binding site" evidence="1">
    <location>
        <position position="14"/>
    </location>
    <ligand>
        <name>ATP</name>
        <dbReference type="ChEBI" id="CHEBI:30616"/>
    </ligand>
</feature>
<feature type="binding site" evidence="1">
    <location>
        <position position="16"/>
    </location>
    <ligand>
        <name>ADP</name>
        <dbReference type="ChEBI" id="CHEBI:456216"/>
    </ligand>
</feature>
<feature type="binding site" evidence="1">
    <location>
        <position position="82"/>
    </location>
    <ligand>
        <name>glycerol</name>
        <dbReference type="ChEBI" id="CHEBI:17754"/>
    </ligand>
</feature>
<feature type="binding site" evidence="1">
    <location>
        <position position="82"/>
    </location>
    <ligand>
        <name>sn-glycerol 3-phosphate</name>
        <dbReference type="ChEBI" id="CHEBI:57597"/>
    </ligand>
</feature>
<feature type="binding site" evidence="1">
    <location>
        <position position="83"/>
    </location>
    <ligand>
        <name>glycerol</name>
        <dbReference type="ChEBI" id="CHEBI:17754"/>
    </ligand>
</feature>
<feature type="binding site" evidence="1">
    <location>
        <position position="83"/>
    </location>
    <ligand>
        <name>sn-glycerol 3-phosphate</name>
        <dbReference type="ChEBI" id="CHEBI:57597"/>
    </ligand>
</feature>
<feature type="binding site" evidence="1">
    <location>
        <position position="135"/>
    </location>
    <ligand>
        <name>glycerol</name>
        <dbReference type="ChEBI" id="CHEBI:17754"/>
    </ligand>
</feature>
<feature type="binding site" evidence="1">
    <location>
        <position position="135"/>
    </location>
    <ligand>
        <name>sn-glycerol 3-phosphate</name>
        <dbReference type="ChEBI" id="CHEBI:57597"/>
    </ligand>
</feature>
<feature type="binding site" evidence="1">
    <location>
        <position position="245"/>
    </location>
    <ligand>
        <name>glycerol</name>
        <dbReference type="ChEBI" id="CHEBI:17754"/>
    </ligand>
</feature>
<feature type="binding site" evidence="1">
    <location>
        <position position="245"/>
    </location>
    <ligand>
        <name>sn-glycerol 3-phosphate</name>
        <dbReference type="ChEBI" id="CHEBI:57597"/>
    </ligand>
</feature>
<feature type="binding site" evidence="1">
    <location>
        <position position="246"/>
    </location>
    <ligand>
        <name>glycerol</name>
        <dbReference type="ChEBI" id="CHEBI:17754"/>
    </ligand>
</feature>
<feature type="binding site" evidence="1">
    <location>
        <position position="267"/>
    </location>
    <ligand>
        <name>ADP</name>
        <dbReference type="ChEBI" id="CHEBI:456216"/>
    </ligand>
</feature>
<feature type="binding site" evidence="1">
    <location>
        <position position="267"/>
    </location>
    <ligand>
        <name>ATP</name>
        <dbReference type="ChEBI" id="CHEBI:30616"/>
    </ligand>
</feature>
<feature type="binding site" evidence="1">
    <location>
        <position position="310"/>
    </location>
    <ligand>
        <name>ADP</name>
        <dbReference type="ChEBI" id="CHEBI:456216"/>
    </ligand>
</feature>
<feature type="binding site" evidence="1">
    <location>
        <position position="310"/>
    </location>
    <ligand>
        <name>ATP</name>
        <dbReference type="ChEBI" id="CHEBI:30616"/>
    </ligand>
</feature>
<feature type="binding site" evidence="1">
    <location>
        <position position="314"/>
    </location>
    <ligand>
        <name>ATP</name>
        <dbReference type="ChEBI" id="CHEBI:30616"/>
    </ligand>
</feature>
<feature type="binding site" evidence="1">
    <location>
        <position position="411"/>
    </location>
    <ligand>
        <name>ADP</name>
        <dbReference type="ChEBI" id="CHEBI:456216"/>
    </ligand>
</feature>
<feature type="binding site" evidence="1">
    <location>
        <position position="411"/>
    </location>
    <ligand>
        <name>ATP</name>
        <dbReference type="ChEBI" id="CHEBI:30616"/>
    </ligand>
</feature>
<feature type="binding site" evidence="1">
    <location>
        <position position="415"/>
    </location>
    <ligand>
        <name>ADP</name>
        <dbReference type="ChEBI" id="CHEBI:456216"/>
    </ligand>
</feature>
<reference key="1">
    <citation type="journal article" date="2002" name="Proc. Natl. Acad. Sci. U.S.A.">
        <title>Complete genome sequence of Clostridium perfringens, an anaerobic flesh-eater.</title>
        <authorList>
            <person name="Shimizu T."/>
            <person name="Ohtani K."/>
            <person name="Hirakawa H."/>
            <person name="Ohshima K."/>
            <person name="Yamashita A."/>
            <person name="Shiba T."/>
            <person name="Ogasawara N."/>
            <person name="Hattori M."/>
            <person name="Kuhara S."/>
            <person name="Hayashi H."/>
        </authorList>
    </citation>
    <scope>NUCLEOTIDE SEQUENCE [LARGE SCALE GENOMIC DNA]</scope>
    <source>
        <strain>13 / Type A</strain>
    </source>
</reference>
<gene>
    <name evidence="1" type="primary">glpK</name>
    <name type="ordered locus">CPE2552</name>
</gene>
<organism>
    <name type="scientific">Clostridium perfringens (strain 13 / Type A)</name>
    <dbReference type="NCBI Taxonomy" id="195102"/>
    <lineage>
        <taxon>Bacteria</taxon>
        <taxon>Bacillati</taxon>
        <taxon>Bacillota</taxon>
        <taxon>Clostridia</taxon>
        <taxon>Eubacteriales</taxon>
        <taxon>Clostridiaceae</taxon>
        <taxon>Clostridium</taxon>
    </lineage>
</organism>
<sequence>MKKYIVALDQGTTSSRAIIFDKEQNIIGVSQKEFNQIYPREGWVEHDPMEIWATQYSVLQEVMAKCNITQENIAAIGITNQRETTIVWDKNTGVPIYNAIVWQCRRTADICDELKERDGLVDYIRENTGLVLDAYFSGTKIKWILDNVEGAREKAEKGELLFGTVDSWLVWKLTNGKVHVTDYTNASRTMIFNIKNLQWDERMLKELDIPRSMLPEVKNSSEIYGYANLGAKGGIRVPIAGIAGDQQAALFGQAAFNKGDVKNTYGTGCFLLMNTGEELVKSKSGLLTTIAIGLHGKVQYALEGSVFVGGAVIQWLRDELRIISDSSDTEYFATKVEDNGGVYVVPAFVGLGAPYWDMYARGTIVGLTRGTNRNHIIRAALESIAYQTRDVLEAMINDVGYDINCIKVDGGASRNNFLMQFQSDLVGKKVIKPIITETTALGAAYLAGLAVGYWSDKEEIAKLWFASEEFEPTISEERRNKYHKKWKKAVERSKGWALED</sequence>